<protein>
    <recommendedName>
        <fullName evidence="1">Enolase</fullName>
        <ecNumber evidence="1">4.2.1.11</ecNumber>
    </recommendedName>
    <alternativeName>
        <fullName evidence="1">2-phospho-D-glycerate hydro-lyase</fullName>
    </alternativeName>
    <alternativeName>
        <fullName evidence="1">2-phosphoglycerate dehydratase</fullName>
    </alternativeName>
</protein>
<name>ENO_CUTAK</name>
<evidence type="ECO:0000255" key="1">
    <source>
        <dbReference type="HAMAP-Rule" id="MF_00318"/>
    </source>
</evidence>
<accession>Q6AAB8</accession>
<keyword id="KW-0963">Cytoplasm</keyword>
<keyword id="KW-0324">Glycolysis</keyword>
<keyword id="KW-0456">Lyase</keyword>
<keyword id="KW-0460">Magnesium</keyword>
<keyword id="KW-0479">Metal-binding</keyword>
<keyword id="KW-0964">Secreted</keyword>
<dbReference type="EC" id="4.2.1.11" evidence="1"/>
<dbReference type="EMBL" id="AE017283">
    <property type="protein sequence ID" value="AAT82298.1"/>
    <property type="molecule type" value="Genomic_DNA"/>
</dbReference>
<dbReference type="RefSeq" id="WP_002516702.1">
    <property type="nucleotide sequence ID" value="NZ_CP025935.1"/>
</dbReference>
<dbReference type="SMR" id="Q6AAB8"/>
<dbReference type="EnsemblBacteria" id="AAT82298">
    <property type="protein sequence ID" value="AAT82298"/>
    <property type="gene ID" value="PPA0545"/>
</dbReference>
<dbReference type="GeneID" id="92856527"/>
<dbReference type="KEGG" id="pac:PPA0545"/>
<dbReference type="eggNOG" id="COG0148">
    <property type="taxonomic scope" value="Bacteria"/>
</dbReference>
<dbReference type="HOGENOM" id="CLU_031223_2_1_11"/>
<dbReference type="UniPathway" id="UPA00109">
    <property type="reaction ID" value="UER00187"/>
</dbReference>
<dbReference type="Proteomes" id="UP000000603">
    <property type="component" value="Chromosome"/>
</dbReference>
<dbReference type="GO" id="GO:0009986">
    <property type="term" value="C:cell surface"/>
    <property type="evidence" value="ECO:0007669"/>
    <property type="project" value="UniProtKB-SubCell"/>
</dbReference>
<dbReference type="GO" id="GO:0005576">
    <property type="term" value="C:extracellular region"/>
    <property type="evidence" value="ECO:0007669"/>
    <property type="project" value="UniProtKB-SubCell"/>
</dbReference>
<dbReference type="GO" id="GO:0000015">
    <property type="term" value="C:phosphopyruvate hydratase complex"/>
    <property type="evidence" value="ECO:0007669"/>
    <property type="project" value="InterPro"/>
</dbReference>
<dbReference type="GO" id="GO:0000287">
    <property type="term" value="F:magnesium ion binding"/>
    <property type="evidence" value="ECO:0007669"/>
    <property type="project" value="UniProtKB-UniRule"/>
</dbReference>
<dbReference type="GO" id="GO:0004634">
    <property type="term" value="F:phosphopyruvate hydratase activity"/>
    <property type="evidence" value="ECO:0007669"/>
    <property type="project" value="UniProtKB-UniRule"/>
</dbReference>
<dbReference type="GO" id="GO:0006096">
    <property type="term" value="P:glycolytic process"/>
    <property type="evidence" value="ECO:0007669"/>
    <property type="project" value="UniProtKB-UniRule"/>
</dbReference>
<dbReference type="CDD" id="cd03313">
    <property type="entry name" value="enolase"/>
    <property type="match status" value="1"/>
</dbReference>
<dbReference type="FunFam" id="3.20.20.120:FF:000001">
    <property type="entry name" value="Enolase"/>
    <property type="match status" value="1"/>
</dbReference>
<dbReference type="FunFam" id="3.30.390.10:FF:000001">
    <property type="entry name" value="Enolase"/>
    <property type="match status" value="1"/>
</dbReference>
<dbReference type="Gene3D" id="3.20.20.120">
    <property type="entry name" value="Enolase-like C-terminal domain"/>
    <property type="match status" value="1"/>
</dbReference>
<dbReference type="Gene3D" id="3.30.390.10">
    <property type="entry name" value="Enolase-like, N-terminal domain"/>
    <property type="match status" value="1"/>
</dbReference>
<dbReference type="HAMAP" id="MF_00318">
    <property type="entry name" value="Enolase"/>
    <property type="match status" value="1"/>
</dbReference>
<dbReference type="InterPro" id="IPR000941">
    <property type="entry name" value="Enolase"/>
</dbReference>
<dbReference type="InterPro" id="IPR036849">
    <property type="entry name" value="Enolase-like_C_sf"/>
</dbReference>
<dbReference type="InterPro" id="IPR029017">
    <property type="entry name" value="Enolase-like_N"/>
</dbReference>
<dbReference type="InterPro" id="IPR020810">
    <property type="entry name" value="Enolase_C"/>
</dbReference>
<dbReference type="InterPro" id="IPR020809">
    <property type="entry name" value="Enolase_CS"/>
</dbReference>
<dbReference type="InterPro" id="IPR020811">
    <property type="entry name" value="Enolase_N"/>
</dbReference>
<dbReference type="NCBIfam" id="TIGR01060">
    <property type="entry name" value="eno"/>
    <property type="match status" value="1"/>
</dbReference>
<dbReference type="PANTHER" id="PTHR11902">
    <property type="entry name" value="ENOLASE"/>
    <property type="match status" value="1"/>
</dbReference>
<dbReference type="PANTHER" id="PTHR11902:SF1">
    <property type="entry name" value="ENOLASE"/>
    <property type="match status" value="1"/>
</dbReference>
<dbReference type="Pfam" id="PF00113">
    <property type="entry name" value="Enolase_C"/>
    <property type="match status" value="1"/>
</dbReference>
<dbReference type="Pfam" id="PF03952">
    <property type="entry name" value="Enolase_N"/>
    <property type="match status" value="1"/>
</dbReference>
<dbReference type="PIRSF" id="PIRSF001400">
    <property type="entry name" value="Enolase"/>
    <property type="match status" value="1"/>
</dbReference>
<dbReference type="PRINTS" id="PR00148">
    <property type="entry name" value="ENOLASE"/>
</dbReference>
<dbReference type="SFLD" id="SFLDS00001">
    <property type="entry name" value="Enolase"/>
    <property type="match status" value="1"/>
</dbReference>
<dbReference type="SFLD" id="SFLDF00002">
    <property type="entry name" value="enolase"/>
    <property type="match status" value="1"/>
</dbReference>
<dbReference type="SMART" id="SM01192">
    <property type="entry name" value="Enolase_C"/>
    <property type="match status" value="1"/>
</dbReference>
<dbReference type="SMART" id="SM01193">
    <property type="entry name" value="Enolase_N"/>
    <property type="match status" value="1"/>
</dbReference>
<dbReference type="SUPFAM" id="SSF51604">
    <property type="entry name" value="Enolase C-terminal domain-like"/>
    <property type="match status" value="1"/>
</dbReference>
<dbReference type="SUPFAM" id="SSF54826">
    <property type="entry name" value="Enolase N-terminal domain-like"/>
    <property type="match status" value="1"/>
</dbReference>
<dbReference type="PROSITE" id="PS00164">
    <property type="entry name" value="ENOLASE"/>
    <property type="match status" value="1"/>
</dbReference>
<comment type="function">
    <text evidence="1">Catalyzes the reversible conversion of 2-phosphoglycerate (2-PG) into phosphoenolpyruvate (PEP). It is essential for the degradation of carbohydrates via glycolysis.</text>
</comment>
<comment type="catalytic activity">
    <reaction evidence="1">
        <text>(2R)-2-phosphoglycerate = phosphoenolpyruvate + H2O</text>
        <dbReference type="Rhea" id="RHEA:10164"/>
        <dbReference type="ChEBI" id="CHEBI:15377"/>
        <dbReference type="ChEBI" id="CHEBI:58289"/>
        <dbReference type="ChEBI" id="CHEBI:58702"/>
        <dbReference type="EC" id="4.2.1.11"/>
    </reaction>
</comment>
<comment type="cofactor">
    <cofactor evidence="1">
        <name>Mg(2+)</name>
        <dbReference type="ChEBI" id="CHEBI:18420"/>
    </cofactor>
    <text evidence="1">Binds a second Mg(2+) ion via substrate during catalysis.</text>
</comment>
<comment type="pathway">
    <text evidence="1">Carbohydrate degradation; glycolysis; pyruvate from D-glyceraldehyde 3-phosphate: step 4/5.</text>
</comment>
<comment type="subcellular location">
    <subcellularLocation>
        <location evidence="1">Cytoplasm</location>
    </subcellularLocation>
    <subcellularLocation>
        <location evidence="1">Secreted</location>
    </subcellularLocation>
    <subcellularLocation>
        <location evidence="1">Cell surface</location>
    </subcellularLocation>
    <text evidence="1">Fractions of enolase are present in both the cytoplasm and on the cell surface.</text>
</comment>
<comment type="similarity">
    <text evidence="1">Belongs to the enolase family.</text>
</comment>
<feature type="chain" id="PRO_0000133945" description="Enolase">
    <location>
        <begin position="1"/>
        <end position="426"/>
    </location>
</feature>
<feature type="active site" description="Proton donor" evidence="1">
    <location>
        <position position="205"/>
    </location>
</feature>
<feature type="active site" description="Proton acceptor" evidence="1">
    <location>
        <position position="335"/>
    </location>
</feature>
<feature type="binding site" evidence="1">
    <location>
        <position position="163"/>
    </location>
    <ligand>
        <name>(2R)-2-phosphoglycerate</name>
        <dbReference type="ChEBI" id="CHEBI:58289"/>
    </ligand>
</feature>
<feature type="binding site" evidence="1">
    <location>
        <position position="242"/>
    </location>
    <ligand>
        <name>Mg(2+)</name>
        <dbReference type="ChEBI" id="CHEBI:18420"/>
    </ligand>
</feature>
<feature type="binding site" evidence="1">
    <location>
        <position position="283"/>
    </location>
    <ligand>
        <name>Mg(2+)</name>
        <dbReference type="ChEBI" id="CHEBI:18420"/>
    </ligand>
</feature>
<feature type="binding site" evidence="1">
    <location>
        <position position="310"/>
    </location>
    <ligand>
        <name>Mg(2+)</name>
        <dbReference type="ChEBI" id="CHEBI:18420"/>
    </ligand>
</feature>
<feature type="binding site" evidence="1">
    <location>
        <position position="335"/>
    </location>
    <ligand>
        <name>(2R)-2-phosphoglycerate</name>
        <dbReference type="ChEBI" id="CHEBI:58289"/>
    </ligand>
</feature>
<feature type="binding site" evidence="1">
    <location>
        <position position="364"/>
    </location>
    <ligand>
        <name>(2R)-2-phosphoglycerate</name>
        <dbReference type="ChEBI" id="CHEBI:58289"/>
    </ligand>
</feature>
<feature type="binding site" evidence="1">
    <location>
        <position position="365"/>
    </location>
    <ligand>
        <name>(2R)-2-phosphoglycerate</name>
        <dbReference type="ChEBI" id="CHEBI:58289"/>
    </ligand>
</feature>
<feature type="binding site" evidence="1">
    <location>
        <position position="386"/>
    </location>
    <ligand>
        <name>(2R)-2-phosphoglycerate</name>
        <dbReference type="ChEBI" id="CHEBI:58289"/>
    </ligand>
</feature>
<proteinExistence type="inferred from homology"/>
<sequence>MATIEFIEAREILDSRGNPTVEVEMILDDGTQARAAVPSGASTGQFEAVELRDGDKKRYSGKGVLKAVENVNEKIAEEVLGCDASEQRIIDQIMIELDGSDNKGKLGANAILGVSLAAAHAAADCAELPLYQYLGGPNSHVLPVPMMNILNGGAHADSDVDIQEFMIAPIGAESFKQAYEWGAAVYHSLKKVLKDKGLATGLGDEGGFAPNLPSNAAALDLILDAIKAAGFEPGKDVALALDVAASEFFEDGKYTFEGQAKTSAEMIAYYEGLIAKYPLVSIEDPLDEEDWDGWAEFTKKLGEKIQIVGDDLFVTNPKRLAKGIETKAANALLVKVNQIGSLSETIDAVELAHRNGYRCMMSHRSGETEDTTIADLAVALSTGQIKSGAPARGERIAKYNQLLRIEEELGDSAEYAGASAFPRFQA</sequence>
<gene>
    <name evidence="1" type="primary">eno</name>
    <name type="ordered locus">PPA0545</name>
</gene>
<reference key="1">
    <citation type="journal article" date="2004" name="Science">
        <title>The complete genome sequence of Propionibacterium acnes, a commensal of human skin.</title>
        <authorList>
            <person name="Brueggemann H."/>
            <person name="Henne A."/>
            <person name="Hoster F."/>
            <person name="Liesegang H."/>
            <person name="Wiezer A."/>
            <person name="Strittmatter A."/>
            <person name="Hujer S."/>
            <person name="Duerre P."/>
            <person name="Gottschalk G."/>
        </authorList>
    </citation>
    <scope>NUCLEOTIDE SEQUENCE [LARGE SCALE GENOMIC DNA]</scope>
    <source>
        <strain>DSM 16379 / KPA171202</strain>
    </source>
</reference>
<organism>
    <name type="scientific">Cutibacterium acnes (strain DSM 16379 / KPA171202)</name>
    <name type="common">Propionibacterium acnes</name>
    <dbReference type="NCBI Taxonomy" id="267747"/>
    <lineage>
        <taxon>Bacteria</taxon>
        <taxon>Bacillati</taxon>
        <taxon>Actinomycetota</taxon>
        <taxon>Actinomycetes</taxon>
        <taxon>Propionibacteriales</taxon>
        <taxon>Propionibacteriaceae</taxon>
        <taxon>Cutibacterium</taxon>
    </lineage>
</organism>